<protein>
    <recommendedName>
        <fullName>Acylphosphatase</fullName>
        <ecNumber>3.6.1.7</ecNumber>
    </recommendedName>
    <alternativeName>
        <fullName>Acylphosphate phosphohydrolase</fullName>
    </alternativeName>
</protein>
<name>ACYP_SULAC</name>
<sequence>MGGLKRMYVIVYGIVQGVGYRRFIQIHAARLGIKGYAKNLPDGSVEILAEGYEEALYKLLDQIKRGPPLSKVEKVDVKFDDYTGEFASFDTY</sequence>
<accession>Q4J8X9</accession>
<reference key="1">
    <citation type="journal article" date="2005" name="J. Bacteriol.">
        <title>The genome of Sulfolobus acidocaldarius, a model organism of the Crenarchaeota.</title>
        <authorList>
            <person name="Chen L."/>
            <person name="Bruegger K."/>
            <person name="Skovgaard M."/>
            <person name="Redder P."/>
            <person name="She Q."/>
            <person name="Torarinsson E."/>
            <person name="Greve B."/>
            <person name="Awayez M."/>
            <person name="Zibat A."/>
            <person name="Klenk H.-P."/>
            <person name="Garrett R.A."/>
        </authorList>
    </citation>
    <scope>NUCLEOTIDE SEQUENCE [LARGE SCALE GENOMIC DNA]</scope>
    <source>
        <strain>ATCC 33909 / DSM 639 / JCM 8929 / NBRC 15157 / NCIMB 11770</strain>
    </source>
</reference>
<organism>
    <name type="scientific">Sulfolobus acidocaldarius (strain ATCC 33909 / DSM 639 / JCM 8929 / NBRC 15157 / NCIMB 11770)</name>
    <dbReference type="NCBI Taxonomy" id="330779"/>
    <lineage>
        <taxon>Archaea</taxon>
        <taxon>Thermoproteota</taxon>
        <taxon>Thermoprotei</taxon>
        <taxon>Sulfolobales</taxon>
        <taxon>Sulfolobaceae</taxon>
        <taxon>Sulfolobus</taxon>
    </lineage>
</organism>
<evidence type="ECO:0000255" key="1">
    <source>
        <dbReference type="PROSITE-ProRule" id="PRU00520"/>
    </source>
</evidence>
<evidence type="ECO:0000305" key="2"/>
<feature type="chain" id="PRO_0000326869" description="Acylphosphatase">
    <location>
        <begin position="1"/>
        <end position="92"/>
    </location>
</feature>
<feature type="domain" description="Acylphosphatase-like" evidence="1">
    <location>
        <begin position="6"/>
        <end position="92"/>
    </location>
</feature>
<feature type="active site" evidence="1">
    <location>
        <position position="21"/>
    </location>
</feature>
<feature type="active site" evidence="1">
    <location>
        <position position="39"/>
    </location>
</feature>
<comment type="catalytic activity">
    <reaction>
        <text>an acyl phosphate + H2O = a carboxylate + phosphate + H(+)</text>
        <dbReference type="Rhea" id="RHEA:14965"/>
        <dbReference type="ChEBI" id="CHEBI:15377"/>
        <dbReference type="ChEBI" id="CHEBI:15378"/>
        <dbReference type="ChEBI" id="CHEBI:29067"/>
        <dbReference type="ChEBI" id="CHEBI:43474"/>
        <dbReference type="ChEBI" id="CHEBI:59918"/>
        <dbReference type="EC" id="3.6.1.7"/>
    </reaction>
</comment>
<comment type="similarity">
    <text evidence="2">Belongs to the acylphosphatase family.</text>
</comment>
<gene>
    <name type="primary">acyP</name>
    <name type="ordered locus">Saci_1420</name>
</gene>
<proteinExistence type="inferred from homology"/>
<dbReference type="EC" id="3.6.1.7"/>
<dbReference type="EMBL" id="CP000077">
    <property type="protein sequence ID" value="AAY80750.1"/>
    <property type="molecule type" value="Genomic_DNA"/>
</dbReference>
<dbReference type="RefSeq" id="WP_011278252.1">
    <property type="nucleotide sequence ID" value="NC_007181.1"/>
</dbReference>
<dbReference type="SMR" id="Q4J8X9"/>
<dbReference type="STRING" id="330779.Saci_1420"/>
<dbReference type="GeneID" id="14551920"/>
<dbReference type="KEGG" id="sai:Saci_1420"/>
<dbReference type="PATRIC" id="fig|330779.12.peg.1368"/>
<dbReference type="eggNOG" id="arCOG01674">
    <property type="taxonomic scope" value="Archaea"/>
</dbReference>
<dbReference type="HOGENOM" id="CLU_141932_2_1_2"/>
<dbReference type="Proteomes" id="UP000001018">
    <property type="component" value="Chromosome"/>
</dbReference>
<dbReference type="GO" id="GO:0003998">
    <property type="term" value="F:acylphosphatase activity"/>
    <property type="evidence" value="ECO:0007669"/>
    <property type="project" value="UniProtKB-EC"/>
</dbReference>
<dbReference type="Gene3D" id="3.30.70.100">
    <property type="match status" value="1"/>
</dbReference>
<dbReference type="InterPro" id="IPR020456">
    <property type="entry name" value="Acylphosphatase"/>
</dbReference>
<dbReference type="InterPro" id="IPR001792">
    <property type="entry name" value="Acylphosphatase-like_dom"/>
</dbReference>
<dbReference type="InterPro" id="IPR036046">
    <property type="entry name" value="Acylphosphatase-like_dom_sf"/>
</dbReference>
<dbReference type="InterPro" id="IPR017968">
    <property type="entry name" value="Acylphosphatase_CS"/>
</dbReference>
<dbReference type="NCBIfam" id="NF011012">
    <property type="entry name" value="PRK14440.1"/>
    <property type="match status" value="1"/>
</dbReference>
<dbReference type="PANTHER" id="PTHR47268">
    <property type="entry name" value="ACYLPHOSPHATASE"/>
    <property type="match status" value="1"/>
</dbReference>
<dbReference type="PANTHER" id="PTHR47268:SF4">
    <property type="entry name" value="ACYLPHOSPHATASE"/>
    <property type="match status" value="1"/>
</dbReference>
<dbReference type="Pfam" id="PF00708">
    <property type="entry name" value="Acylphosphatase"/>
    <property type="match status" value="1"/>
</dbReference>
<dbReference type="SUPFAM" id="SSF54975">
    <property type="entry name" value="Acylphosphatase/BLUF domain-like"/>
    <property type="match status" value="1"/>
</dbReference>
<dbReference type="PROSITE" id="PS00151">
    <property type="entry name" value="ACYLPHOSPHATASE_2"/>
    <property type="match status" value="1"/>
</dbReference>
<dbReference type="PROSITE" id="PS51160">
    <property type="entry name" value="ACYLPHOSPHATASE_3"/>
    <property type="match status" value="1"/>
</dbReference>
<keyword id="KW-0378">Hydrolase</keyword>
<keyword id="KW-1185">Reference proteome</keyword>